<comment type="function">
    <text evidence="1">Catalyzes the formation of acetyl phosphate from acetate and ATP. Can also catalyze the reverse reaction.</text>
</comment>
<comment type="catalytic activity">
    <reaction evidence="1">
        <text>acetate + ATP = acetyl phosphate + ADP</text>
        <dbReference type="Rhea" id="RHEA:11352"/>
        <dbReference type="ChEBI" id="CHEBI:22191"/>
        <dbReference type="ChEBI" id="CHEBI:30089"/>
        <dbReference type="ChEBI" id="CHEBI:30616"/>
        <dbReference type="ChEBI" id="CHEBI:456216"/>
        <dbReference type="EC" id="2.7.2.1"/>
    </reaction>
</comment>
<comment type="cofactor">
    <cofactor evidence="1">
        <name>Mg(2+)</name>
        <dbReference type="ChEBI" id="CHEBI:18420"/>
    </cofactor>
    <cofactor evidence="1">
        <name>Mn(2+)</name>
        <dbReference type="ChEBI" id="CHEBI:29035"/>
    </cofactor>
    <text evidence="1">Mg(2+). Can also accept Mn(2+).</text>
</comment>
<comment type="pathway">
    <text evidence="1">Metabolic intermediate biosynthesis; acetyl-CoA biosynthesis; acetyl-CoA from acetate: step 1/2.</text>
</comment>
<comment type="subunit">
    <text evidence="1">Homodimer.</text>
</comment>
<comment type="subcellular location">
    <subcellularLocation>
        <location evidence="1">Cytoplasm</location>
    </subcellularLocation>
</comment>
<comment type="similarity">
    <text evidence="1">Belongs to the acetokinase family.</text>
</comment>
<gene>
    <name evidence="1" type="primary">ackA</name>
    <name type="ordered locus">YPDSF_1973</name>
</gene>
<organism>
    <name type="scientific">Yersinia pestis (strain Pestoides F)</name>
    <dbReference type="NCBI Taxonomy" id="386656"/>
    <lineage>
        <taxon>Bacteria</taxon>
        <taxon>Pseudomonadati</taxon>
        <taxon>Pseudomonadota</taxon>
        <taxon>Gammaproteobacteria</taxon>
        <taxon>Enterobacterales</taxon>
        <taxon>Yersiniaceae</taxon>
        <taxon>Yersinia</taxon>
    </lineage>
</organism>
<protein>
    <recommendedName>
        <fullName evidence="1">Acetate kinase</fullName>
        <ecNumber evidence="1">2.7.2.1</ecNumber>
    </recommendedName>
    <alternativeName>
        <fullName evidence="1">Acetokinase</fullName>
    </alternativeName>
</protein>
<sequence>MSSKLVLVLNCGSSSLKFAIIDATNGEEHISGLAECFHLPEARIKWKVDGGKQEAALGAGAAHSEALNFIVNTILAQKPALSAQLTAIGHRIVHGGEKFTSSVIVTEDVIQGIKDSIPFAPLHNPAHLIGIAEALKSFPNLADKNVAVFDTAFHQTMPEESYLYALPYSLYKDHGIRRYGAHGTSHFYVSQEAAKILNKPLEELNVITCHLGNGGSVTAVRNGKCVDTSMGLTPLEGLVMGTRSGDLDPAIIFHLHDAMGMSVDQINTLLTKESGLLGLTEVTSDCRYVEDNYATKADAKRAMDVFCHRLAKYIGSYTALMDGRLDAVVFTGGIGENAAMVRELTLDKLGLLGFEIDHERNMAARFGKSGTITKDSSRLALVIPTNEELVIAQDAARLTA</sequence>
<keyword id="KW-0067">ATP-binding</keyword>
<keyword id="KW-0963">Cytoplasm</keyword>
<keyword id="KW-0418">Kinase</keyword>
<keyword id="KW-0460">Magnesium</keyword>
<keyword id="KW-0479">Metal-binding</keyword>
<keyword id="KW-0547">Nucleotide-binding</keyword>
<keyword id="KW-0808">Transferase</keyword>
<name>ACKA_YERPP</name>
<accession>A4TM44</accession>
<evidence type="ECO:0000255" key="1">
    <source>
        <dbReference type="HAMAP-Rule" id="MF_00020"/>
    </source>
</evidence>
<reference key="1">
    <citation type="submission" date="2007-02" db="EMBL/GenBank/DDBJ databases">
        <title>Complete sequence of chromosome of Yersinia pestis Pestoides F.</title>
        <authorList>
            <consortium name="US DOE Joint Genome Institute"/>
            <person name="Copeland A."/>
            <person name="Lucas S."/>
            <person name="Lapidus A."/>
            <person name="Barry K."/>
            <person name="Detter J.C."/>
            <person name="Glavina del Rio T."/>
            <person name="Hammon N."/>
            <person name="Israni S."/>
            <person name="Dalin E."/>
            <person name="Tice H."/>
            <person name="Pitluck S."/>
            <person name="Di Bartolo G."/>
            <person name="Chain P."/>
            <person name="Malfatti S."/>
            <person name="Shin M."/>
            <person name="Vergez L."/>
            <person name="Schmutz J."/>
            <person name="Larimer F."/>
            <person name="Land M."/>
            <person name="Hauser L."/>
            <person name="Worsham P."/>
            <person name="Chu M."/>
            <person name="Bearden S."/>
            <person name="Garcia E."/>
            <person name="Richardson P."/>
        </authorList>
    </citation>
    <scope>NUCLEOTIDE SEQUENCE [LARGE SCALE GENOMIC DNA]</scope>
    <source>
        <strain>Pestoides F</strain>
    </source>
</reference>
<dbReference type="EC" id="2.7.2.1" evidence="1"/>
<dbReference type="EMBL" id="CP000668">
    <property type="protein sequence ID" value="ABP40356.1"/>
    <property type="molecule type" value="Genomic_DNA"/>
</dbReference>
<dbReference type="RefSeq" id="WP_002210288.1">
    <property type="nucleotide sequence ID" value="NZ_CP009715.1"/>
</dbReference>
<dbReference type="SMR" id="A4TM44"/>
<dbReference type="GeneID" id="57976126"/>
<dbReference type="KEGG" id="ypp:YPDSF_1973"/>
<dbReference type="PATRIC" id="fig|386656.14.peg.3440"/>
<dbReference type="UniPathway" id="UPA00340">
    <property type="reaction ID" value="UER00458"/>
</dbReference>
<dbReference type="GO" id="GO:0005829">
    <property type="term" value="C:cytosol"/>
    <property type="evidence" value="ECO:0007669"/>
    <property type="project" value="TreeGrafter"/>
</dbReference>
<dbReference type="GO" id="GO:0008776">
    <property type="term" value="F:acetate kinase activity"/>
    <property type="evidence" value="ECO:0007669"/>
    <property type="project" value="UniProtKB-UniRule"/>
</dbReference>
<dbReference type="GO" id="GO:0005524">
    <property type="term" value="F:ATP binding"/>
    <property type="evidence" value="ECO:0007669"/>
    <property type="project" value="UniProtKB-KW"/>
</dbReference>
<dbReference type="GO" id="GO:0000287">
    <property type="term" value="F:magnesium ion binding"/>
    <property type="evidence" value="ECO:0007669"/>
    <property type="project" value="UniProtKB-UniRule"/>
</dbReference>
<dbReference type="GO" id="GO:0006083">
    <property type="term" value="P:acetate metabolic process"/>
    <property type="evidence" value="ECO:0007669"/>
    <property type="project" value="TreeGrafter"/>
</dbReference>
<dbReference type="GO" id="GO:0006085">
    <property type="term" value="P:acetyl-CoA biosynthetic process"/>
    <property type="evidence" value="ECO:0007669"/>
    <property type="project" value="UniProtKB-UniRule"/>
</dbReference>
<dbReference type="CDD" id="cd24010">
    <property type="entry name" value="ASKHA_NBD_AcK_PK"/>
    <property type="match status" value="1"/>
</dbReference>
<dbReference type="FunFam" id="3.30.420.40:FF:000041">
    <property type="entry name" value="Acetate kinase"/>
    <property type="match status" value="1"/>
</dbReference>
<dbReference type="FunFam" id="3.30.420.40:FF:000042">
    <property type="entry name" value="Acetate kinase"/>
    <property type="match status" value="1"/>
</dbReference>
<dbReference type="Gene3D" id="3.30.420.40">
    <property type="match status" value="2"/>
</dbReference>
<dbReference type="HAMAP" id="MF_00020">
    <property type="entry name" value="Acetate_kinase"/>
    <property type="match status" value="1"/>
</dbReference>
<dbReference type="InterPro" id="IPR004372">
    <property type="entry name" value="Ac/propionate_kinase"/>
</dbReference>
<dbReference type="InterPro" id="IPR000890">
    <property type="entry name" value="Aliphatic_acid_kin_short-chain"/>
</dbReference>
<dbReference type="InterPro" id="IPR023865">
    <property type="entry name" value="Aliphatic_acid_kinase_CS"/>
</dbReference>
<dbReference type="InterPro" id="IPR043129">
    <property type="entry name" value="ATPase_NBD"/>
</dbReference>
<dbReference type="NCBIfam" id="TIGR00016">
    <property type="entry name" value="ackA"/>
    <property type="match status" value="1"/>
</dbReference>
<dbReference type="PANTHER" id="PTHR21060">
    <property type="entry name" value="ACETATE KINASE"/>
    <property type="match status" value="1"/>
</dbReference>
<dbReference type="PANTHER" id="PTHR21060:SF21">
    <property type="entry name" value="ACETATE KINASE"/>
    <property type="match status" value="1"/>
</dbReference>
<dbReference type="Pfam" id="PF00871">
    <property type="entry name" value="Acetate_kinase"/>
    <property type="match status" value="1"/>
</dbReference>
<dbReference type="PIRSF" id="PIRSF000722">
    <property type="entry name" value="Acetate_prop_kin"/>
    <property type="match status" value="1"/>
</dbReference>
<dbReference type="PRINTS" id="PR00471">
    <property type="entry name" value="ACETATEKNASE"/>
</dbReference>
<dbReference type="SUPFAM" id="SSF53067">
    <property type="entry name" value="Actin-like ATPase domain"/>
    <property type="match status" value="2"/>
</dbReference>
<dbReference type="PROSITE" id="PS01075">
    <property type="entry name" value="ACETATE_KINASE_1"/>
    <property type="match status" value="1"/>
</dbReference>
<dbReference type="PROSITE" id="PS01076">
    <property type="entry name" value="ACETATE_KINASE_2"/>
    <property type="match status" value="1"/>
</dbReference>
<feature type="chain" id="PRO_1000002287" description="Acetate kinase">
    <location>
        <begin position="1"/>
        <end position="400"/>
    </location>
</feature>
<feature type="active site" description="Proton donor/acceptor" evidence="1">
    <location>
        <position position="150"/>
    </location>
</feature>
<feature type="binding site" evidence="1">
    <location>
        <position position="10"/>
    </location>
    <ligand>
        <name>Mg(2+)</name>
        <dbReference type="ChEBI" id="CHEBI:18420"/>
    </ligand>
</feature>
<feature type="binding site" evidence="1">
    <location>
        <position position="17"/>
    </location>
    <ligand>
        <name>ATP</name>
        <dbReference type="ChEBI" id="CHEBI:30616"/>
    </ligand>
</feature>
<feature type="binding site" evidence="1">
    <location>
        <position position="91"/>
    </location>
    <ligand>
        <name>substrate</name>
    </ligand>
</feature>
<feature type="binding site" evidence="1">
    <location>
        <begin position="210"/>
        <end position="214"/>
    </location>
    <ligand>
        <name>ATP</name>
        <dbReference type="ChEBI" id="CHEBI:30616"/>
    </ligand>
</feature>
<feature type="binding site" evidence="1">
    <location>
        <begin position="285"/>
        <end position="287"/>
    </location>
    <ligand>
        <name>ATP</name>
        <dbReference type="ChEBI" id="CHEBI:30616"/>
    </ligand>
</feature>
<feature type="binding site" evidence="1">
    <location>
        <begin position="333"/>
        <end position="337"/>
    </location>
    <ligand>
        <name>ATP</name>
        <dbReference type="ChEBI" id="CHEBI:30616"/>
    </ligand>
</feature>
<feature type="binding site" evidence="1">
    <location>
        <position position="387"/>
    </location>
    <ligand>
        <name>Mg(2+)</name>
        <dbReference type="ChEBI" id="CHEBI:18420"/>
    </ligand>
</feature>
<feature type="site" description="Transition state stabilizer" evidence="1">
    <location>
        <position position="182"/>
    </location>
</feature>
<feature type="site" description="Transition state stabilizer" evidence="1">
    <location>
        <position position="243"/>
    </location>
</feature>
<proteinExistence type="inferred from homology"/>